<reference key="1">
    <citation type="journal article" date="1997" name="J. Mol. Evol.">
        <title>Of worms and men: an evolutionary perspective on the fibroblast growth factor (FGF) and FGF receptor families.</title>
        <authorList>
            <person name="Coulier F."/>
            <person name="Pontarotti P."/>
            <person name="Roubin R."/>
            <person name="Hartung H."/>
            <person name="Goldfarb M."/>
            <person name="Birnbaum D."/>
        </authorList>
    </citation>
    <scope>NUCLEOTIDE SEQUENCE [MRNA]</scope>
    <source>
        <strain>Bristol N2</strain>
    </source>
</reference>
<reference key="2">
    <citation type="journal article" date="1998" name="Science">
        <title>Genome sequence of the nematode C. elegans: a platform for investigating biology.</title>
        <authorList>
            <consortium name="The C. elegans sequencing consortium"/>
        </authorList>
    </citation>
    <scope>NUCLEOTIDE SEQUENCE [LARGE SCALE GENOMIC DNA]</scope>
    <source>
        <strain>Bristol N2</strain>
    </source>
</reference>
<reference key="3">
    <citation type="journal article" date="1997" name="Genome Res.">
        <title>Interpreting a sequenced genome: toward a cosmid transgenic library of Caenorhabditis elegans.</title>
        <authorList>
            <person name="Janke D.L."/>
            <person name="Schein J.E."/>
            <person name="Ha T."/>
            <person name="Franz N.W."/>
            <person name="O'Neil N.J."/>
            <person name="Vatcher G.P."/>
            <person name="Stewart H.I."/>
            <person name="Kuervers L.M."/>
            <person name="Baillie D.L."/>
            <person name="Rose A.M."/>
        </authorList>
    </citation>
    <scope>FUNCTION</scope>
</reference>
<reference key="4">
    <citation type="journal article" date="2006" name="BMC Genomics">
        <title>Direct and heterologous approaches to identify the LET-756/FGF interactome.</title>
        <authorList>
            <person name="Popovici C."/>
            <person name="Berda Y."/>
            <person name="Conchonaud F."/>
            <person name="Harbis A."/>
            <person name="Birnbaum D."/>
            <person name="Roubin R."/>
        </authorList>
    </citation>
    <scope>INTERACTION WITH PAL-1</scope>
</reference>
<reference key="5">
    <citation type="journal article" date="2006" name="Development">
        <title>FGF negatively regulates muscle membrane extension in Caenorhabditis elegans.</title>
        <authorList>
            <person name="Dixon S.J."/>
            <person name="Alexander M."/>
            <person name="Fernandes R."/>
            <person name="Ricker N."/>
            <person name="Roy P.J."/>
        </authorList>
    </citation>
    <scope>FUNCTION</scope>
    <scope>SUBCELLULAR LOCATION</scope>
    <scope>TISSUE SPECIFICITY</scope>
</reference>
<feature type="chain" id="PRO_0000147619" description="Protein let-756">
    <location>
        <begin position="1"/>
        <end position="425"/>
    </location>
</feature>
<feature type="region of interest" description="Disordered" evidence="1">
    <location>
        <begin position="277"/>
        <end position="298"/>
    </location>
</feature>
<feature type="region of interest" description="Disordered" evidence="1">
    <location>
        <begin position="314"/>
        <end position="425"/>
    </location>
</feature>
<feature type="compositionally biased region" description="Basic residues" evidence="1">
    <location>
        <begin position="281"/>
        <end position="291"/>
    </location>
</feature>
<feature type="compositionally biased region" description="Polar residues" evidence="1">
    <location>
        <begin position="329"/>
        <end position="340"/>
    </location>
</feature>
<feature type="compositionally biased region" description="Basic residues" evidence="1">
    <location>
        <begin position="378"/>
        <end position="389"/>
    </location>
</feature>
<feature type="compositionally biased region" description="Polar residues" evidence="1">
    <location>
        <begin position="395"/>
        <end position="425"/>
    </location>
</feature>
<gene>
    <name type="primary">let-756</name>
    <name type="ORF">C05D11.4</name>
</gene>
<proteinExistence type="evidence at protein level"/>
<protein>
    <recommendedName>
        <fullName>Protein let-756</fullName>
    </recommendedName>
    <alternativeName>
        <fullName>Lethal protein 756</fullName>
    </alternativeName>
</protein>
<keyword id="KW-0217">Developmental protein</keyword>
<keyword id="KW-0339">Growth factor</keyword>
<keyword id="KW-0472">Membrane</keyword>
<keyword id="KW-0539">Nucleus</keyword>
<keyword id="KW-1185">Reference proteome</keyword>
<dbReference type="EMBL" id="AJ010553">
    <property type="protein sequence ID" value="CAA09234.1"/>
    <property type="molecule type" value="mRNA"/>
</dbReference>
<dbReference type="EMBL" id="FO080365">
    <property type="protein sequence ID" value="CCD63193.1"/>
    <property type="molecule type" value="Genomic_DNA"/>
</dbReference>
<dbReference type="PIR" id="H88481">
    <property type="entry name" value="H88481"/>
</dbReference>
<dbReference type="RefSeq" id="NP_498403.1">
    <property type="nucleotide sequence ID" value="NM_066002.7"/>
</dbReference>
<dbReference type="SMR" id="Q11184"/>
<dbReference type="BioGRID" id="41127">
    <property type="interactions" value="199"/>
</dbReference>
<dbReference type="FunCoup" id="Q11184">
    <property type="interactions" value="141"/>
</dbReference>
<dbReference type="IntAct" id="Q11184">
    <property type="interactions" value="21"/>
</dbReference>
<dbReference type="STRING" id="6239.C05D11.4.1"/>
<dbReference type="PaxDb" id="6239-C05D11.4"/>
<dbReference type="EnsemblMetazoa" id="C05D11.4.1">
    <property type="protein sequence ID" value="C05D11.4.1"/>
    <property type="gene ID" value="WBGene00002881"/>
</dbReference>
<dbReference type="GeneID" id="175909"/>
<dbReference type="KEGG" id="cel:CELE_C05D11.4"/>
<dbReference type="UCSC" id="C05D11.4">
    <property type="organism name" value="c. elegans"/>
</dbReference>
<dbReference type="AGR" id="WB:WBGene00002881"/>
<dbReference type="CTD" id="175909"/>
<dbReference type="WormBase" id="C05D11.4">
    <property type="protein sequence ID" value="CE24786"/>
    <property type="gene ID" value="WBGene00002881"/>
    <property type="gene designation" value="let-756"/>
</dbReference>
<dbReference type="eggNOG" id="KOG3885">
    <property type="taxonomic scope" value="Eukaryota"/>
</dbReference>
<dbReference type="GeneTree" id="ENSGT00940000165881"/>
<dbReference type="HOGENOM" id="CLU_045880_0_0_1"/>
<dbReference type="InParanoid" id="Q11184"/>
<dbReference type="OMA" id="NYYNLYA"/>
<dbReference type="OrthoDB" id="6158176at2759"/>
<dbReference type="Reactome" id="R-CEL-1257604">
    <property type="pathway name" value="PIP3 activates AKT signaling"/>
</dbReference>
<dbReference type="Reactome" id="R-CEL-190322">
    <property type="pathway name" value="FGFR4 ligand binding and activation"/>
</dbReference>
<dbReference type="Reactome" id="R-CEL-190370">
    <property type="pathway name" value="FGFR1b ligand binding and activation"/>
</dbReference>
<dbReference type="Reactome" id="R-CEL-190371">
    <property type="pathway name" value="FGFR3b ligand binding and activation"/>
</dbReference>
<dbReference type="Reactome" id="R-CEL-190372">
    <property type="pathway name" value="FGFR3c ligand binding and activation"/>
</dbReference>
<dbReference type="Reactome" id="R-CEL-190373">
    <property type="pathway name" value="FGFR1c ligand binding and activation"/>
</dbReference>
<dbReference type="Reactome" id="R-CEL-190375">
    <property type="pathway name" value="FGFR2c ligand binding and activation"/>
</dbReference>
<dbReference type="Reactome" id="R-CEL-190377">
    <property type="pathway name" value="FGFR2b ligand binding and activation"/>
</dbReference>
<dbReference type="Reactome" id="R-CEL-3000170">
    <property type="pathway name" value="Syndecan interactions"/>
</dbReference>
<dbReference type="Reactome" id="R-CEL-3000171">
    <property type="pathway name" value="Non-integrin membrane-ECM interactions"/>
</dbReference>
<dbReference type="Reactome" id="R-CEL-5654219">
    <property type="pathway name" value="Phospholipase C-mediated cascade: FGFR1"/>
</dbReference>
<dbReference type="Reactome" id="R-CEL-5654228">
    <property type="pathway name" value="Phospholipase C-mediated cascade, FGFR4"/>
</dbReference>
<dbReference type="Reactome" id="R-CEL-5654688">
    <property type="pathway name" value="SHC-mediated cascade:FGFR1"/>
</dbReference>
<dbReference type="Reactome" id="R-CEL-5654689">
    <property type="pathway name" value="PI-3K cascade:FGFR1"/>
</dbReference>
<dbReference type="Reactome" id="R-CEL-5654693">
    <property type="pathway name" value="FRS-mediated FGFR1 signaling"/>
</dbReference>
<dbReference type="Reactome" id="R-CEL-5654699">
    <property type="pathway name" value="SHC-mediated cascade:FGFR2"/>
</dbReference>
<dbReference type="Reactome" id="R-CEL-5654704">
    <property type="pathway name" value="SHC-mediated cascade:FGFR3"/>
</dbReference>
<dbReference type="Reactome" id="R-CEL-5654712">
    <property type="pathway name" value="FRS-mediated FGFR4 signaling"/>
</dbReference>
<dbReference type="Reactome" id="R-CEL-5654719">
    <property type="pathway name" value="SHC-mediated cascade:FGFR4"/>
</dbReference>
<dbReference type="Reactome" id="R-CEL-5654720">
    <property type="pathway name" value="PI-3K cascade:FGFR4"/>
</dbReference>
<dbReference type="Reactome" id="R-CEL-5654726">
    <property type="pathway name" value="Negative regulation of FGFR1 signaling"/>
</dbReference>
<dbReference type="Reactome" id="R-CEL-5654733">
    <property type="pathway name" value="Negative regulation of FGFR4 signaling"/>
</dbReference>
<dbReference type="Reactome" id="R-CEL-5658623">
    <property type="pathway name" value="FGFRL1 modulation of FGFR1 signaling"/>
</dbReference>
<dbReference type="Reactome" id="R-CEL-5673001">
    <property type="pathway name" value="RAF/MAP kinase cascade"/>
</dbReference>
<dbReference type="Reactome" id="R-CEL-6811558">
    <property type="pathway name" value="PI5P, PP2A and IER3 Regulate PI3K/AKT Signaling"/>
</dbReference>
<dbReference type="SignaLink" id="Q11184"/>
<dbReference type="PRO" id="PR:Q11184"/>
<dbReference type="Proteomes" id="UP000001940">
    <property type="component" value="Chromosome III"/>
</dbReference>
<dbReference type="Bgee" id="WBGene00002881">
    <property type="expression patterns" value="Expressed in larva and 3 other cell types or tissues"/>
</dbReference>
<dbReference type="GO" id="GO:0005737">
    <property type="term" value="C:cytoplasm"/>
    <property type="evidence" value="ECO:0000314"/>
    <property type="project" value="WormBase"/>
</dbReference>
<dbReference type="GO" id="GO:0005615">
    <property type="term" value="C:extracellular space"/>
    <property type="evidence" value="ECO:0000314"/>
    <property type="project" value="WormBase"/>
</dbReference>
<dbReference type="GO" id="GO:0016020">
    <property type="term" value="C:membrane"/>
    <property type="evidence" value="ECO:0007669"/>
    <property type="project" value="UniProtKB-SubCell"/>
</dbReference>
<dbReference type="GO" id="GO:0016607">
    <property type="term" value="C:nuclear speck"/>
    <property type="evidence" value="ECO:0000314"/>
    <property type="project" value="WormBase"/>
</dbReference>
<dbReference type="GO" id="GO:0005730">
    <property type="term" value="C:nucleolus"/>
    <property type="evidence" value="ECO:0000314"/>
    <property type="project" value="WormBase"/>
</dbReference>
<dbReference type="GO" id="GO:0005654">
    <property type="term" value="C:nucleoplasm"/>
    <property type="evidence" value="ECO:0000314"/>
    <property type="project" value="WormBase"/>
</dbReference>
<dbReference type="GO" id="GO:0005634">
    <property type="term" value="C:nucleus"/>
    <property type="evidence" value="ECO:0000314"/>
    <property type="project" value="WormBase"/>
</dbReference>
<dbReference type="GO" id="GO:0005104">
    <property type="term" value="F:fibroblast growth factor receptor binding"/>
    <property type="evidence" value="ECO:0000250"/>
    <property type="project" value="WormBase"/>
</dbReference>
<dbReference type="GO" id="GO:0008083">
    <property type="term" value="F:growth factor activity"/>
    <property type="evidence" value="ECO:0000315"/>
    <property type="project" value="WormBase"/>
</dbReference>
<dbReference type="GO" id="GO:0019901">
    <property type="term" value="F:protein kinase binding"/>
    <property type="evidence" value="ECO:0000353"/>
    <property type="project" value="WormBase"/>
</dbReference>
<dbReference type="GO" id="GO:0061629">
    <property type="term" value="F:RNA polymerase II-specific DNA-binding transcription factor binding"/>
    <property type="evidence" value="ECO:0000353"/>
    <property type="project" value="WormBase"/>
</dbReference>
<dbReference type="GO" id="GO:0008543">
    <property type="term" value="P:fibroblast growth factor receptor signaling pathway"/>
    <property type="evidence" value="ECO:0000315"/>
    <property type="project" value="WormBase"/>
</dbReference>
<dbReference type="GO" id="GO:0031345">
    <property type="term" value="P:negative regulation of cell projection organization"/>
    <property type="evidence" value="ECO:0000315"/>
    <property type="project" value="WormBase"/>
</dbReference>
<dbReference type="GO" id="GO:0002119">
    <property type="term" value="P:nematode larval development"/>
    <property type="evidence" value="ECO:0000315"/>
    <property type="project" value="WormBase"/>
</dbReference>
<dbReference type="GO" id="GO:0022008">
    <property type="term" value="P:neurogenesis"/>
    <property type="evidence" value="ECO:0000318"/>
    <property type="project" value="GO_Central"/>
</dbReference>
<dbReference type="GO" id="GO:0008284">
    <property type="term" value="P:positive regulation of cell population proliferation"/>
    <property type="evidence" value="ECO:0000318"/>
    <property type="project" value="GO_Central"/>
</dbReference>
<dbReference type="GO" id="GO:0043410">
    <property type="term" value="P:positive regulation of MAPK cascade"/>
    <property type="evidence" value="ECO:0000318"/>
    <property type="project" value="GO_Central"/>
</dbReference>
<dbReference type="GO" id="GO:0048841">
    <property type="term" value="P:regulation of axon extension involved in axon guidance"/>
    <property type="evidence" value="ECO:0000315"/>
    <property type="project" value="WormBase"/>
</dbReference>
<dbReference type="GO" id="GO:0030334">
    <property type="term" value="P:regulation of cell migration"/>
    <property type="evidence" value="ECO:0000318"/>
    <property type="project" value="GO_Central"/>
</dbReference>
<dbReference type="CDD" id="cd00058">
    <property type="entry name" value="beta-trefoil_FGF"/>
    <property type="match status" value="1"/>
</dbReference>
<dbReference type="Gene3D" id="2.80.10.50">
    <property type="match status" value="1"/>
</dbReference>
<dbReference type="InterPro" id="IPR002209">
    <property type="entry name" value="Fibroblast_GF_fam"/>
</dbReference>
<dbReference type="InterPro" id="IPR008996">
    <property type="entry name" value="IL1/FGF"/>
</dbReference>
<dbReference type="InterPro" id="IPR056378">
    <property type="entry name" value="Let-756-like_FGF"/>
</dbReference>
<dbReference type="PANTHER" id="PTHR11486">
    <property type="entry name" value="FIBROBLAST GROWTH FACTOR"/>
    <property type="match status" value="1"/>
</dbReference>
<dbReference type="Pfam" id="PF00167">
    <property type="entry name" value="FGF"/>
    <property type="match status" value="1"/>
</dbReference>
<dbReference type="PRINTS" id="PR00262">
    <property type="entry name" value="IL1HBGF"/>
</dbReference>
<dbReference type="SMART" id="SM00442">
    <property type="entry name" value="FGF"/>
    <property type="match status" value="1"/>
</dbReference>
<dbReference type="SUPFAM" id="SSF50353">
    <property type="entry name" value="Cytokine"/>
    <property type="match status" value="1"/>
</dbReference>
<sequence length="425" mass="49569">MAVPAASSIVSYGGAATSNFLTTPVTPFLAGFYNSNFVTDRINSCAPYRVDRIRKQLQDEEENGYPPADDRRRGALFCRSGTWLEMLPIENPDDGSTRVKVHGTKEESSKFSIVEFVSVAMSLVSIRGVETKNFICMDPSGKLYATPSSNYSTECVFLEEMMENYYNLYASCAYGDRFNPWYIELRRSGKPRRGPNSKKRRKASHFLVVHHDLDRLRSPVPNGNDVTDLVVASLFHQPPSHPLFRQQTVTKPPNPHRISNLRAKVEMTNQAEKQRLLEEKKRRREKKKRRREDRLRKEEQIREARRQELKSLREEELRRRYQQQQQQQASTQTRYNRPQNPANPYPTYRPLPTRSTVQSPRPAYNPYWQSPVTQAPHHNSHHHHHHHPRVSSSSDPQQRHQSQQHYLAQTVSNPNRQNVNYQRYP</sequence>
<organism>
    <name type="scientific">Caenorhabditis elegans</name>
    <dbReference type="NCBI Taxonomy" id="6239"/>
    <lineage>
        <taxon>Eukaryota</taxon>
        <taxon>Metazoa</taxon>
        <taxon>Ecdysozoa</taxon>
        <taxon>Nematoda</taxon>
        <taxon>Chromadorea</taxon>
        <taxon>Rhabditida</taxon>
        <taxon>Rhabditina</taxon>
        <taxon>Rhabditomorpha</taxon>
        <taxon>Rhabditoidea</taxon>
        <taxon>Rhabditidae</taxon>
        <taxon>Peloderinae</taxon>
        <taxon>Caenorhabditis</taxon>
    </lineage>
</organism>
<evidence type="ECO:0000256" key="1">
    <source>
        <dbReference type="SAM" id="MobiDB-lite"/>
    </source>
</evidence>
<evidence type="ECO:0000269" key="2">
    <source>
    </source>
</evidence>
<evidence type="ECO:0000269" key="3">
    <source>
    </source>
</evidence>
<evidence type="ECO:0000269" key="4">
    <source>
    </source>
</evidence>
<evidence type="ECO:0000305" key="5"/>
<accession>Q11184</accession>
<accession>O76831</accession>
<name>LE756_CAEEL</name>
<comment type="function">
    <text evidence="2 4">Required for larval development (PubMed:9331368). Probably by binding receptor egl-15, negatively regulates membrane protrusion from body wall muscles during larval development (PubMed:16495308).</text>
</comment>
<comment type="subunit">
    <text evidence="3">Interacts with pal-1.</text>
</comment>
<comment type="interaction">
    <interactant intactId="EBI-3843983">
        <id>Q11184</id>
    </interactant>
    <interactant intactId="EBI-2412471">
        <id>Q09958</id>
        <label>C18A3.3</label>
    </interactant>
    <organismsDiffer>false</organismsDiffer>
    <experiments>2</experiments>
</comment>
<comment type="interaction">
    <interactant intactId="EBI-3843983">
        <id>Q11184</id>
    </interactant>
    <interactant intactId="EBI-3844027">
        <id>Q21556</id>
        <label>col-129</label>
    </interactant>
    <organismsDiffer>false</organismsDiffer>
    <experiments>4</experiments>
</comment>
<comment type="interaction">
    <interactant intactId="EBI-3843983">
        <id>Q11184</id>
    </interactant>
    <interactant intactId="EBI-313329">
        <id>Q18688</id>
        <label>daf-21</label>
    </interactant>
    <organismsDiffer>false</organismsDiffer>
    <experiments>3</experiments>
</comment>
<comment type="interaction">
    <interactant intactId="EBI-3843983">
        <id>Q11184</id>
    </interactant>
    <interactant intactId="EBI-966073">
        <id>Q20655</id>
        <label>ftt-2</label>
    </interactant>
    <organismsDiffer>false</organismsDiffer>
    <experiments>3</experiments>
</comment>
<comment type="interaction">
    <interactant intactId="EBI-3843983">
        <id>Q11184</id>
    </interactant>
    <interactant intactId="EBI-317777">
        <id>P28548</id>
        <label>kin-10</label>
    </interactant>
    <organismsDiffer>false</organismsDiffer>
    <experiments>3</experiments>
</comment>
<comment type="interaction">
    <interactant intactId="EBI-3843983">
        <id>Q11184</id>
    </interactant>
    <interactant intactId="EBI-367861">
        <id>P18334</id>
        <label>kin-3</label>
    </interactant>
    <organismsDiffer>false</organismsDiffer>
    <experiments>3</experiments>
</comment>
<comment type="interaction">
    <interactant intactId="EBI-3843983">
        <id>Q11184</id>
    </interactant>
    <interactant intactId="EBI-318108">
        <id>P41932</id>
        <label>par-5</label>
    </interactant>
    <organismsDiffer>false</organismsDiffer>
    <experiments>3</experiments>
</comment>
<comment type="interaction">
    <interactant intactId="EBI-3843983">
        <id>Q11184</id>
    </interactant>
    <interactant intactId="EBI-316106">
        <id>P47991</id>
        <label>rpl-6</label>
    </interactant>
    <organismsDiffer>false</organismsDiffer>
    <experiments>3</experiments>
</comment>
<comment type="interaction">
    <interactant intactId="EBI-3843983">
        <id>Q11184</id>
    </interactant>
    <interactant intactId="EBI-3844009">
        <id>Q22054</id>
        <label>rps-16</label>
    </interactant>
    <organismsDiffer>false</organismsDiffer>
    <experiments>4</experiments>
</comment>
<comment type="interaction">
    <interactant intactId="EBI-3843983">
        <id>Q11184</id>
    </interactant>
    <interactant intactId="EBI-314583">
        <id>G5EDD8</id>
        <label>skr-2</label>
    </interactant>
    <organismsDiffer>false</organismsDiffer>
    <experiments>3</experiments>
</comment>
<comment type="interaction">
    <interactant intactId="EBI-3843983">
        <id>Q11184</id>
    </interactant>
    <interactant intactId="EBI-359815">
        <id>P31946</id>
        <label>YWHAB</label>
    </interactant>
    <organismsDiffer>true</organismsDiffer>
    <experiments>2</experiments>
</comment>
<comment type="subcellular location">
    <subcellularLocation>
        <location evidence="2">Nucleus</location>
    </subcellularLocation>
    <subcellularLocation>
        <location evidence="4">Membrane</location>
        <topology evidence="2">Peripheral membrane protein</topology>
    </subcellularLocation>
</comment>
<comment type="tissue specificity">
    <text evidence="2">Expressed in pharynx, CAN neuron and body wall muscles.</text>
</comment>
<comment type="similarity">
    <text evidence="5">Belongs to the heparin-binding growth factors family.</text>
</comment>